<comment type="subcellular location">
    <subcellularLocation>
        <location evidence="2">Membrane</location>
        <topology evidence="2">Single-pass membrane protein</topology>
    </subcellularLocation>
</comment>
<feature type="chain" id="PRO_0000077962" description="Uncharacterized protein HI_0866">
    <location>
        <begin position="1"/>
        <end position="207"/>
    </location>
</feature>
<feature type="transmembrane region" description="Helical" evidence="1">
    <location>
        <begin position="177"/>
        <end position="197"/>
    </location>
</feature>
<dbReference type="EMBL" id="L42023">
    <property type="protein sequence ID" value="AAC22527.1"/>
    <property type="molecule type" value="Genomic_DNA"/>
</dbReference>
<dbReference type="PIR" id="I64014">
    <property type="entry name" value="I64014"/>
</dbReference>
<dbReference type="RefSeq" id="NP_439026.1">
    <property type="nucleotide sequence ID" value="NC_000907.1"/>
</dbReference>
<dbReference type="SMR" id="P44063"/>
<dbReference type="STRING" id="71421.HI_0866"/>
<dbReference type="EnsemblBacteria" id="AAC22527">
    <property type="protein sequence ID" value="AAC22527"/>
    <property type="gene ID" value="HI_0866"/>
</dbReference>
<dbReference type="KEGG" id="hin:HI_0866"/>
<dbReference type="PATRIC" id="fig|71421.8.peg.907"/>
<dbReference type="eggNOG" id="COG3765">
    <property type="taxonomic scope" value="Bacteria"/>
</dbReference>
<dbReference type="HOGENOM" id="CLU_1324841_0_0_6"/>
<dbReference type="OrthoDB" id="6535795at2"/>
<dbReference type="PhylomeDB" id="P44063"/>
<dbReference type="BioCyc" id="HINF71421:G1GJ1-907-MONOMER"/>
<dbReference type="Proteomes" id="UP000000579">
    <property type="component" value="Chromosome"/>
</dbReference>
<dbReference type="GO" id="GO:0016020">
    <property type="term" value="C:membrane"/>
    <property type="evidence" value="ECO:0007669"/>
    <property type="project" value="UniProtKB-SubCell"/>
</dbReference>
<dbReference type="Gene3D" id="3.30.1890.10">
    <property type="entry name" value="FepE-like"/>
    <property type="match status" value="1"/>
</dbReference>
<dbReference type="InterPro" id="IPR050445">
    <property type="entry name" value="Bact_polysacc_biosynth/exp"/>
</dbReference>
<dbReference type="PANTHER" id="PTHR32309:SF13">
    <property type="entry name" value="FERRIC ENTEROBACTIN TRANSPORT PROTEIN FEPE"/>
    <property type="match status" value="1"/>
</dbReference>
<dbReference type="PANTHER" id="PTHR32309">
    <property type="entry name" value="TYROSINE-PROTEIN KINASE"/>
    <property type="match status" value="1"/>
</dbReference>
<dbReference type="SUPFAM" id="SSF160355">
    <property type="entry name" value="Bacterial polysaccharide co-polymerase-like"/>
    <property type="match status" value="1"/>
</dbReference>
<keyword id="KW-0472">Membrane</keyword>
<keyword id="KW-1185">Reference proteome</keyword>
<keyword id="KW-0812">Transmembrane</keyword>
<keyword id="KW-1133">Transmembrane helix</keyword>
<evidence type="ECO:0000255" key="1"/>
<evidence type="ECO:0000305" key="2"/>
<protein>
    <recommendedName>
        <fullName>Uncharacterized protein HI_0866</fullName>
    </recommendedName>
</protein>
<accession>P44063</accession>
<reference key="1">
    <citation type="journal article" date="1995" name="Science">
        <title>Whole-genome random sequencing and assembly of Haemophilus influenzae Rd.</title>
        <authorList>
            <person name="Fleischmann R.D."/>
            <person name="Adams M.D."/>
            <person name="White O."/>
            <person name="Clayton R.A."/>
            <person name="Kirkness E.F."/>
            <person name="Kerlavage A.R."/>
            <person name="Bult C.J."/>
            <person name="Tomb J.-F."/>
            <person name="Dougherty B.A."/>
            <person name="Merrick J.M."/>
            <person name="McKenney K."/>
            <person name="Sutton G.G."/>
            <person name="FitzHugh W."/>
            <person name="Fields C.A."/>
            <person name="Gocayne J.D."/>
            <person name="Scott J.D."/>
            <person name="Shirley R."/>
            <person name="Liu L.-I."/>
            <person name="Glodek A."/>
            <person name="Kelley J.M."/>
            <person name="Weidman J.F."/>
            <person name="Phillips C.A."/>
            <person name="Spriggs T."/>
            <person name="Hedblom E."/>
            <person name="Cotton M.D."/>
            <person name="Utterback T.R."/>
            <person name="Hanna M.C."/>
            <person name="Nguyen D.T."/>
            <person name="Saudek D.M."/>
            <person name="Brandon R.C."/>
            <person name="Fine L.D."/>
            <person name="Fritchman J.L."/>
            <person name="Fuhrmann J.L."/>
            <person name="Geoghagen N.S.M."/>
            <person name="Gnehm C.L."/>
            <person name="McDonald L.A."/>
            <person name="Small K.V."/>
            <person name="Fraser C.M."/>
            <person name="Smith H.O."/>
            <person name="Venter J.C."/>
        </authorList>
    </citation>
    <scope>NUCLEOTIDE SEQUENCE [LARGE SCALE GENOMIC DNA]</scope>
    <source>
        <strain>ATCC 51907 / DSM 11121 / KW20 / Rd</strain>
    </source>
</reference>
<reference key="2">
    <citation type="submission" date="1998-05" db="EMBL/GenBank/DDBJ databases">
        <authorList>
            <person name="White O."/>
            <person name="Clayton R.A."/>
            <person name="Kerlavage A.R."/>
            <person name="Fleischmann R.D."/>
            <person name="Peterson J."/>
            <person name="Hickey E."/>
            <person name="Dodson R."/>
            <person name="Gwinn M."/>
        </authorList>
    </citation>
    <scope>SEQUENCE REVISION</scope>
</reference>
<sequence>MDKIALKITFSAETPKYAQSVLTEYVNFVSQYSLNQTNQEFKQGFNLRLDELRFSKEQIEENLTEEKKVQVENLTNALDIAKKAGIKDFSRGNNISDSKLADGTYLFILAEKYLQAQLDIAKNTPVVYPANYYITDRQLFKLNKLASQLELVEDVKTYYYLSSPDYPVVKDNPKRSLILAIGFIIGILLPTFFILLGSVIQTNKKQS</sequence>
<organism>
    <name type="scientific">Haemophilus influenzae (strain ATCC 51907 / DSM 11121 / KW20 / Rd)</name>
    <dbReference type="NCBI Taxonomy" id="71421"/>
    <lineage>
        <taxon>Bacteria</taxon>
        <taxon>Pseudomonadati</taxon>
        <taxon>Pseudomonadota</taxon>
        <taxon>Gammaproteobacteria</taxon>
        <taxon>Pasteurellales</taxon>
        <taxon>Pasteurellaceae</taxon>
        <taxon>Haemophilus</taxon>
    </lineage>
</organism>
<gene>
    <name type="ordered locus">HI_0866</name>
</gene>
<name>Y866_HAEIN</name>
<proteinExistence type="predicted"/>